<keyword id="KW-1185">Reference proteome</keyword>
<accession>O67201</accession>
<feature type="chain" id="PRO_0000186903" description="Uncharacterized protein aq_1121">
    <location>
        <begin position="1"/>
        <end position="268"/>
    </location>
</feature>
<feature type="region of interest" description="Disordered" evidence="1">
    <location>
        <begin position="45"/>
        <end position="64"/>
    </location>
</feature>
<sequence length="268" mass="30157">MFGKPEGKPKGLNWLYRDTYIGKRKGITLGFSFAMQNDIDQELISDTQGPAPGINGQGKPSPGAGSVQVRVPYMILPNPITTPEVRNHPVDMRMYGADLAIHYGPLSFILEAGQHQFKNVFLDAQKLSEDFKNNWFIIKGAYALNPKSTTVFEPYVSYYIWDPDIKEDSKGRAYGDAANFIKGNKAGKEKATLGKISVTSLGVNIWYTKAKLMSLTFEYQIINEERNEITPLPFNSALSFSRHLPLIFLRFCSQSFPNSSPYLKYCPF</sequence>
<reference key="1">
    <citation type="journal article" date="1998" name="Nature">
        <title>The complete genome of the hyperthermophilic bacterium Aquifex aeolicus.</title>
        <authorList>
            <person name="Deckert G."/>
            <person name="Warren P.V."/>
            <person name="Gaasterland T."/>
            <person name="Young W.G."/>
            <person name="Lenox A.L."/>
            <person name="Graham D.E."/>
            <person name="Overbeek R."/>
            <person name="Snead M.A."/>
            <person name="Keller M."/>
            <person name="Aujay M."/>
            <person name="Huber R."/>
            <person name="Feldman R.A."/>
            <person name="Short J.M."/>
            <person name="Olsen G.J."/>
            <person name="Swanson R.V."/>
        </authorList>
    </citation>
    <scope>NUCLEOTIDE SEQUENCE [LARGE SCALE GENOMIC DNA]</scope>
    <source>
        <strain>VF5</strain>
    </source>
</reference>
<name>Y1121_AQUAE</name>
<dbReference type="EMBL" id="AE000657">
    <property type="protein sequence ID" value="AAC07165.1"/>
    <property type="molecule type" value="Genomic_DNA"/>
</dbReference>
<dbReference type="PIR" id="F70396">
    <property type="entry name" value="F70396"/>
</dbReference>
<dbReference type="RefSeq" id="NP_213765.1">
    <property type="nucleotide sequence ID" value="NC_000918.1"/>
</dbReference>
<dbReference type="RefSeq" id="WP_010880703.1">
    <property type="nucleotide sequence ID" value="NC_000918.1"/>
</dbReference>
<dbReference type="EnsemblBacteria" id="AAC07165">
    <property type="protein sequence ID" value="AAC07165"/>
    <property type="gene ID" value="aq_1121"/>
</dbReference>
<dbReference type="KEGG" id="aae:aq_1121"/>
<dbReference type="HOGENOM" id="CLU_1036840_0_0_0"/>
<dbReference type="InParanoid" id="O67201"/>
<dbReference type="OrthoDB" id="9775at2"/>
<dbReference type="Proteomes" id="UP000000798">
    <property type="component" value="Chromosome"/>
</dbReference>
<dbReference type="Gene3D" id="2.40.160.10">
    <property type="entry name" value="Porin"/>
    <property type="match status" value="1"/>
</dbReference>
<dbReference type="InterPro" id="IPR023614">
    <property type="entry name" value="Porin_dom_sf"/>
</dbReference>
<dbReference type="SUPFAM" id="SSF56935">
    <property type="entry name" value="Porins"/>
    <property type="match status" value="1"/>
</dbReference>
<protein>
    <recommendedName>
        <fullName>Uncharacterized protein aq_1121</fullName>
    </recommendedName>
</protein>
<proteinExistence type="predicted"/>
<organism>
    <name type="scientific">Aquifex aeolicus (strain VF5)</name>
    <dbReference type="NCBI Taxonomy" id="224324"/>
    <lineage>
        <taxon>Bacteria</taxon>
        <taxon>Pseudomonadati</taxon>
        <taxon>Aquificota</taxon>
        <taxon>Aquificia</taxon>
        <taxon>Aquificales</taxon>
        <taxon>Aquificaceae</taxon>
        <taxon>Aquifex</taxon>
    </lineage>
</organism>
<gene>
    <name type="ordered locus">aq_1121</name>
</gene>
<evidence type="ECO:0000256" key="1">
    <source>
        <dbReference type="SAM" id="MobiDB-lite"/>
    </source>
</evidence>